<gene>
    <name evidence="1" type="primary">gmk</name>
    <name type="ordered locus">BF3500</name>
</gene>
<reference key="1">
    <citation type="journal article" date="2005" name="Science">
        <title>Extensive DNA inversions in the B. fragilis genome control variable gene expression.</title>
        <authorList>
            <person name="Cerdeno-Tarraga A.-M."/>
            <person name="Patrick S."/>
            <person name="Crossman L.C."/>
            <person name="Blakely G."/>
            <person name="Abratt V."/>
            <person name="Lennard N."/>
            <person name="Poxton I."/>
            <person name="Duerden B."/>
            <person name="Harris B."/>
            <person name="Quail M.A."/>
            <person name="Barron A."/>
            <person name="Clark L."/>
            <person name="Corton C."/>
            <person name="Doggett J."/>
            <person name="Holden M.T.G."/>
            <person name="Larke N."/>
            <person name="Line A."/>
            <person name="Lord A."/>
            <person name="Norbertczak H."/>
            <person name="Ormond D."/>
            <person name="Price C."/>
            <person name="Rabbinowitsch E."/>
            <person name="Woodward J."/>
            <person name="Barrell B.G."/>
            <person name="Parkhill J."/>
        </authorList>
    </citation>
    <scope>NUCLEOTIDE SEQUENCE [LARGE SCALE GENOMIC DNA]</scope>
    <source>
        <strain>ATCC 25285 / DSM 2151 / CCUG 4856 / JCM 11019 / LMG 10263 / NCTC 9343 / Onslow / VPI 2553 / EN-2</strain>
    </source>
</reference>
<dbReference type="EC" id="2.7.4.8" evidence="1"/>
<dbReference type="EMBL" id="CR626927">
    <property type="protein sequence ID" value="CAH09188.1"/>
    <property type="molecule type" value="Genomic_DNA"/>
</dbReference>
<dbReference type="RefSeq" id="WP_005790592.1">
    <property type="nucleotide sequence ID" value="NZ_UFTH01000001.1"/>
</dbReference>
<dbReference type="SMR" id="Q5L9N9"/>
<dbReference type="PaxDb" id="272559-BF9343_3407"/>
<dbReference type="GeneID" id="60367499"/>
<dbReference type="KEGG" id="bfs:BF9343_3407"/>
<dbReference type="eggNOG" id="COG0194">
    <property type="taxonomic scope" value="Bacteria"/>
</dbReference>
<dbReference type="HOGENOM" id="CLU_001715_1_1_10"/>
<dbReference type="Proteomes" id="UP000006731">
    <property type="component" value="Chromosome"/>
</dbReference>
<dbReference type="GO" id="GO:0005829">
    <property type="term" value="C:cytosol"/>
    <property type="evidence" value="ECO:0007669"/>
    <property type="project" value="TreeGrafter"/>
</dbReference>
<dbReference type="GO" id="GO:0005524">
    <property type="term" value="F:ATP binding"/>
    <property type="evidence" value="ECO:0007669"/>
    <property type="project" value="UniProtKB-UniRule"/>
</dbReference>
<dbReference type="GO" id="GO:0004385">
    <property type="term" value="F:guanylate kinase activity"/>
    <property type="evidence" value="ECO:0007669"/>
    <property type="project" value="UniProtKB-UniRule"/>
</dbReference>
<dbReference type="CDD" id="cd00071">
    <property type="entry name" value="GMPK"/>
    <property type="match status" value="1"/>
</dbReference>
<dbReference type="FunFam" id="3.30.63.10:FF:000005">
    <property type="entry name" value="Guanylate kinase"/>
    <property type="match status" value="1"/>
</dbReference>
<dbReference type="Gene3D" id="3.30.63.10">
    <property type="entry name" value="Guanylate Kinase phosphate binding domain"/>
    <property type="match status" value="1"/>
</dbReference>
<dbReference type="Gene3D" id="3.40.50.300">
    <property type="entry name" value="P-loop containing nucleotide triphosphate hydrolases"/>
    <property type="match status" value="1"/>
</dbReference>
<dbReference type="HAMAP" id="MF_00328">
    <property type="entry name" value="Guanylate_kinase"/>
    <property type="match status" value="1"/>
</dbReference>
<dbReference type="InterPro" id="IPR008145">
    <property type="entry name" value="GK/Ca_channel_bsu"/>
</dbReference>
<dbReference type="InterPro" id="IPR008144">
    <property type="entry name" value="Guanylate_kin-like_dom"/>
</dbReference>
<dbReference type="InterPro" id="IPR017665">
    <property type="entry name" value="Guanylate_kinase"/>
</dbReference>
<dbReference type="InterPro" id="IPR020590">
    <property type="entry name" value="Guanylate_kinase_CS"/>
</dbReference>
<dbReference type="InterPro" id="IPR027417">
    <property type="entry name" value="P-loop_NTPase"/>
</dbReference>
<dbReference type="NCBIfam" id="TIGR03263">
    <property type="entry name" value="guanyl_kin"/>
    <property type="match status" value="1"/>
</dbReference>
<dbReference type="PANTHER" id="PTHR23117:SF13">
    <property type="entry name" value="GUANYLATE KINASE"/>
    <property type="match status" value="1"/>
</dbReference>
<dbReference type="PANTHER" id="PTHR23117">
    <property type="entry name" value="GUANYLATE KINASE-RELATED"/>
    <property type="match status" value="1"/>
</dbReference>
<dbReference type="Pfam" id="PF00625">
    <property type="entry name" value="Guanylate_kin"/>
    <property type="match status" value="1"/>
</dbReference>
<dbReference type="SMART" id="SM00072">
    <property type="entry name" value="GuKc"/>
    <property type="match status" value="1"/>
</dbReference>
<dbReference type="SUPFAM" id="SSF52540">
    <property type="entry name" value="P-loop containing nucleoside triphosphate hydrolases"/>
    <property type="match status" value="1"/>
</dbReference>
<dbReference type="PROSITE" id="PS00856">
    <property type="entry name" value="GUANYLATE_KINASE_1"/>
    <property type="match status" value="1"/>
</dbReference>
<dbReference type="PROSITE" id="PS50052">
    <property type="entry name" value="GUANYLATE_KINASE_2"/>
    <property type="match status" value="1"/>
</dbReference>
<feature type="chain" id="PRO_0000266289" description="Guanylate kinase">
    <location>
        <begin position="1"/>
        <end position="204"/>
    </location>
</feature>
<feature type="domain" description="Guanylate kinase-like" evidence="1">
    <location>
        <begin position="16"/>
        <end position="196"/>
    </location>
</feature>
<feature type="binding site" evidence="1">
    <location>
        <begin position="23"/>
        <end position="30"/>
    </location>
    <ligand>
        <name>ATP</name>
        <dbReference type="ChEBI" id="CHEBI:30616"/>
    </ligand>
</feature>
<proteinExistence type="inferred from homology"/>
<accession>Q5L9N9</accession>
<comment type="function">
    <text evidence="1">Essential for recycling GMP and indirectly, cGMP.</text>
</comment>
<comment type="catalytic activity">
    <reaction evidence="1">
        <text>GMP + ATP = GDP + ADP</text>
        <dbReference type="Rhea" id="RHEA:20780"/>
        <dbReference type="ChEBI" id="CHEBI:30616"/>
        <dbReference type="ChEBI" id="CHEBI:58115"/>
        <dbReference type="ChEBI" id="CHEBI:58189"/>
        <dbReference type="ChEBI" id="CHEBI:456216"/>
        <dbReference type="EC" id="2.7.4.8"/>
    </reaction>
</comment>
<comment type="subcellular location">
    <subcellularLocation>
        <location evidence="1">Cytoplasm</location>
    </subcellularLocation>
</comment>
<comment type="similarity">
    <text evidence="1">Belongs to the guanylate kinase family.</text>
</comment>
<evidence type="ECO:0000255" key="1">
    <source>
        <dbReference type="HAMAP-Rule" id="MF_00328"/>
    </source>
</evidence>
<sequence length="204" mass="22980">MNPTERITTPHKTGEAKVIIFSAPSGSGKSTIINYLLAQKLNLAFSISATSRPPRGNEKHGVEYFFLSPDEFRQRIANNEFLEYEEVYTDRFYGTLKAQVEKQLAAGQNVVFDVDVVGGCNIKKYYGERALSLFIQPPCIDELRRRLIGRGTDTPEVIESRIAKAEYELSFAPKFDKVIINDDLETAKAHALKVIKEFLGIDTE</sequence>
<protein>
    <recommendedName>
        <fullName evidence="1">Guanylate kinase</fullName>
        <ecNumber evidence="1">2.7.4.8</ecNumber>
    </recommendedName>
    <alternativeName>
        <fullName evidence="1">GMP kinase</fullName>
    </alternativeName>
</protein>
<name>KGUA_BACFN</name>
<organism>
    <name type="scientific">Bacteroides fragilis (strain ATCC 25285 / DSM 2151 / CCUG 4856 / JCM 11019 / LMG 10263 / NCTC 9343 / Onslow / VPI 2553 / EN-2)</name>
    <dbReference type="NCBI Taxonomy" id="272559"/>
    <lineage>
        <taxon>Bacteria</taxon>
        <taxon>Pseudomonadati</taxon>
        <taxon>Bacteroidota</taxon>
        <taxon>Bacteroidia</taxon>
        <taxon>Bacteroidales</taxon>
        <taxon>Bacteroidaceae</taxon>
        <taxon>Bacteroides</taxon>
    </lineage>
</organism>
<keyword id="KW-0067">ATP-binding</keyword>
<keyword id="KW-0963">Cytoplasm</keyword>
<keyword id="KW-0418">Kinase</keyword>
<keyword id="KW-0547">Nucleotide-binding</keyword>
<keyword id="KW-0808">Transferase</keyword>